<feature type="chain" id="PRO_0000186673" description="PTS system N-acetylmuramic acid-specific EIIBC component">
    <location>
        <begin position="1"/>
        <end position="481"/>
    </location>
</feature>
<feature type="transmembrane region" description="Helical" evidence="3">
    <location>
        <begin position="124"/>
        <end position="144"/>
    </location>
</feature>
<feature type="transmembrane region" description="Helical" evidence="3">
    <location>
        <begin position="165"/>
        <end position="185"/>
    </location>
</feature>
<feature type="transmembrane region" description="Helical" evidence="3">
    <location>
        <begin position="190"/>
        <end position="210"/>
    </location>
</feature>
<feature type="transmembrane region" description="Helical" evidence="3">
    <location>
        <begin position="225"/>
        <end position="245"/>
    </location>
</feature>
<feature type="transmembrane region" description="Helical" evidence="3">
    <location>
        <begin position="263"/>
        <end position="283"/>
    </location>
</feature>
<feature type="transmembrane region" description="Helical" evidence="3">
    <location>
        <begin position="307"/>
        <end position="327"/>
    </location>
</feature>
<feature type="transmembrane region" description="Helical" evidence="3">
    <location>
        <begin position="342"/>
        <end position="362"/>
    </location>
</feature>
<feature type="transmembrane region" description="Helical" evidence="3">
    <location>
        <begin position="376"/>
        <end position="396"/>
    </location>
</feature>
<feature type="transmembrane region" description="Helical" evidence="3">
    <location>
        <begin position="406"/>
        <end position="426"/>
    </location>
</feature>
<feature type="transmembrane region" description="Helical" evidence="3">
    <location>
        <begin position="448"/>
        <end position="468"/>
    </location>
</feature>
<feature type="domain" description="PTS EIIB type-1" evidence="2">
    <location>
        <begin position="1"/>
        <end position="89"/>
    </location>
</feature>
<feature type="domain" description="PTS EIIC type-1" evidence="3">
    <location>
        <begin position="122"/>
        <end position="481"/>
    </location>
</feature>
<feature type="active site" description="Phosphocysteine intermediate; for EIIB activity" evidence="2">
    <location>
        <position position="28"/>
    </location>
</feature>
<name>PTYBC_VIBCH</name>
<keyword id="KW-0997">Cell inner membrane</keyword>
<keyword id="KW-1003">Cell membrane</keyword>
<keyword id="KW-0418">Kinase</keyword>
<keyword id="KW-0472">Membrane</keyword>
<keyword id="KW-0598">Phosphotransferase system</keyword>
<keyword id="KW-1185">Reference proteome</keyword>
<keyword id="KW-0762">Sugar transport</keyword>
<keyword id="KW-0808">Transferase</keyword>
<keyword id="KW-0812">Transmembrane</keyword>
<keyword id="KW-1133">Transmembrane helix</keyword>
<keyword id="KW-0813">Transport</keyword>
<organism>
    <name type="scientific">Vibrio cholerae serotype O1 (strain ATCC 39315 / El Tor Inaba N16961)</name>
    <dbReference type="NCBI Taxonomy" id="243277"/>
    <lineage>
        <taxon>Bacteria</taxon>
        <taxon>Pseudomonadati</taxon>
        <taxon>Pseudomonadota</taxon>
        <taxon>Gammaproteobacteria</taxon>
        <taxon>Vibrionales</taxon>
        <taxon>Vibrionaceae</taxon>
        <taxon>Vibrio</taxon>
    </lineage>
</organism>
<comment type="function">
    <text evidence="1">The phosphoenolpyruvate-dependent sugar phosphotransferase system (sugar PTS), a major carbohydrate active transport system, catalyzes the phosphorylation of incoming sugar substrates concomitantly with their translocation across the cell membrane. This system is involved in N-acetylmuramic acid (MurNAc) transport, yielding cytoplasmic MurNAc-6-P. Is also able to take up anhydro-N-acetylmuramic acid (anhMurNAc), but cannot phosphorylate the carbon 6, probably because of the 1,6-anhydro ring.</text>
</comment>
<comment type="catalytic activity">
    <reaction evidence="1">
        <text>N-acetyl-beta-D-muramate(out) + N(pros)-phospho-L-histidyl-[protein] = N-acetyl-beta-D-muramate 6-phosphate(in) + L-histidyl-[protein]</text>
        <dbReference type="Rhea" id="RHEA:33399"/>
        <dbReference type="Rhea" id="RHEA-COMP:9745"/>
        <dbReference type="Rhea" id="RHEA-COMP:9746"/>
        <dbReference type="ChEBI" id="CHEBI:29979"/>
        <dbReference type="ChEBI" id="CHEBI:58721"/>
        <dbReference type="ChEBI" id="CHEBI:64837"/>
        <dbReference type="ChEBI" id="CHEBI:64848"/>
        <dbReference type="EC" id="2.7.1.192"/>
    </reaction>
</comment>
<comment type="subcellular location">
    <subcellularLocation>
        <location evidence="3">Cell inner membrane</location>
        <topology evidence="3">Multi-pass membrane protein</topology>
    </subcellularLocation>
</comment>
<comment type="domain">
    <text evidence="2">The EIIB domain is phosphorylated by phospho-EIIA on a cysteinyl or histidyl residue, depending on the transported sugar. Then, it transfers the phosphoryl group to the sugar substrate concomitantly with the sugar uptake processed by the EIIC domain.</text>
</comment>
<comment type="domain">
    <text evidence="3">The EIIC domain forms the PTS system translocation channel and contains the specific substrate-binding site.</text>
</comment>
<comment type="sequence caution" evidence="4">
    <conflict type="erroneous initiation">
        <sequence resource="EMBL-CDS" id="AAF93383"/>
    </conflict>
</comment>
<reference key="1">
    <citation type="journal article" date="2000" name="Nature">
        <title>DNA sequence of both chromosomes of the cholera pathogen Vibrio cholerae.</title>
        <authorList>
            <person name="Heidelberg J.F."/>
            <person name="Eisen J.A."/>
            <person name="Nelson W.C."/>
            <person name="Clayton R.A."/>
            <person name="Gwinn M.L."/>
            <person name="Dodson R.J."/>
            <person name="Haft D.H."/>
            <person name="Hickey E.K."/>
            <person name="Peterson J.D."/>
            <person name="Umayam L.A."/>
            <person name="Gill S.R."/>
            <person name="Nelson K.E."/>
            <person name="Read T.D."/>
            <person name="Tettelin H."/>
            <person name="Richardson D.L."/>
            <person name="Ermolaeva M.D."/>
            <person name="Vamathevan J.J."/>
            <person name="Bass S."/>
            <person name="Qin H."/>
            <person name="Dragoi I."/>
            <person name="Sellers P."/>
            <person name="McDonald L.A."/>
            <person name="Utterback T.R."/>
            <person name="Fleischmann R.D."/>
            <person name="Nierman W.C."/>
            <person name="White O."/>
            <person name="Salzberg S.L."/>
            <person name="Smith H.O."/>
            <person name="Colwell R.R."/>
            <person name="Mekalanos J.J."/>
            <person name="Venter J.C."/>
            <person name="Fraser C.M."/>
        </authorList>
    </citation>
    <scope>NUCLEOTIDE SEQUENCE [LARGE SCALE GENOMIC DNA]</scope>
    <source>
        <strain>ATCC 39315 / El Tor Inaba N16961</strain>
    </source>
</reference>
<accession>Q9KVD9</accession>
<proteinExistence type="inferred from homology"/>
<dbReference type="EC" id="2.7.1.192" evidence="1"/>
<dbReference type="EMBL" id="AE003852">
    <property type="protein sequence ID" value="AAF93383.1"/>
    <property type="status" value="ALT_INIT"/>
    <property type="molecule type" value="Genomic_DNA"/>
</dbReference>
<dbReference type="PIR" id="H82352">
    <property type="entry name" value="H82352"/>
</dbReference>
<dbReference type="RefSeq" id="NP_229864.1">
    <property type="nucleotide sequence ID" value="NC_002505.1"/>
</dbReference>
<dbReference type="RefSeq" id="WP_001074155.1">
    <property type="nucleotide sequence ID" value="NZ_LT906614.1"/>
</dbReference>
<dbReference type="SMR" id="Q9KVD9"/>
<dbReference type="STRING" id="243277.VC_0207"/>
<dbReference type="DNASU" id="2614844"/>
<dbReference type="EnsemblBacteria" id="AAF93383">
    <property type="protein sequence ID" value="AAF93383"/>
    <property type="gene ID" value="VC_0207"/>
</dbReference>
<dbReference type="GeneID" id="69721088"/>
<dbReference type="KEGG" id="vch:VC_0207"/>
<dbReference type="PATRIC" id="fig|243277.26.peg.188"/>
<dbReference type="eggNOG" id="COG1263">
    <property type="taxonomic scope" value="Bacteria"/>
</dbReference>
<dbReference type="eggNOG" id="COG1264">
    <property type="taxonomic scope" value="Bacteria"/>
</dbReference>
<dbReference type="HOGENOM" id="CLU_012312_2_0_6"/>
<dbReference type="Proteomes" id="UP000000584">
    <property type="component" value="Chromosome 1"/>
</dbReference>
<dbReference type="GO" id="GO:0005886">
    <property type="term" value="C:plasma membrane"/>
    <property type="evidence" value="ECO:0000318"/>
    <property type="project" value="GO_Central"/>
</dbReference>
<dbReference type="GO" id="GO:0016301">
    <property type="term" value="F:kinase activity"/>
    <property type="evidence" value="ECO:0007669"/>
    <property type="project" value="UniProtKB-KW"/>
</dbReference>
<dbReference type="GO" id="GO:0008982">
    <property type="term" value="F:protein-N(PI)-phosphohistidine-sugar phosphotransferase activity"/>
    <property type="evidence" value="ECO:0007669"/>
    <property type="project" value="InterPro"/>
</dbReference>
<dbReference type="GO" id="GO:0090588">
    <property type="term" value="F:protein-phosphocysteine-N-acetylmuramate phosphotransferase system transporter activity"/>
    <property type="evidence" value="ECO:0000318"/>
    <property type="project" value="GO_Central"/>
</dbReference>
<dbReference type="GO" id="GO:0009401">
    <property type="term" value="P:phosphoenolpyruvate-dependent sugar phosphotransferase system"/>
    <property type="evidence" value="ECO:0000318"/>
    <property type="project" value="GO_Central"/>
</dbReference>
<dbReference type="CDD" id="cd00212">
    <property type="entry name" value="PTS_IIB_glc"/>
    <property type="match status" value="1"/>
</dbReference>
<dbReference type="FunFam" id="3.30.1360.60:FF:000001">
    <property type="entry name" value="PTS system glucose-specific IIBC component PtsG"/>
    <property type="match status" value="1"/>
</dbReference>
<dbReference type="Gene3D" id="3.30.1360.60">
    <property type="entry name" value="Glucose permease domain IIB"/>
    <property type="match status" value="1"/>
</dbReference>
<dbReference type="InterPro" id="IPR036878">
    <property type="entry name" value="Glu_permease_IIB"/>
</dbReference>
<dbReference type="InterPro" id="IPR018113">
    <property type="entry name" value="PTrfase_EIIB_Cys"/>
</dbReference>
<dbReference type="InterPro" id="IPR003352">
    <property type="entry name" value="PTS_EIIC"/>
</dbReference>
<dbReference type="InterPro" id="IPR013013">
    <property type="entry name" value="PTS_EIIC_1"/>
</dbReference>
<dbReference type="InterPro" id="IPR001996">
    <property type="entry name" value="PTS_IIB_1"/>
</dbReference>
<dbReference type="InterPro" id="IPR050558">
    <property type="entry name" value="PTS_Sugar-Specific_Components"/>
</dbReference>
<dbReference type="NCBIfam" id="NF007152">
    <property type="entry name" value="PRK09586.1"/>
    <property type="match status" value="1"/>
</dbReference>
<dbReference type="PANTHER" id="PTHR30175">
    <property type="entry name" value="PHOSPHOTRANSFERASE SYSTEM TRANSPORT PROTEIN"/>
    <property type="match status" value="1"/>
</dbReference>
<dbReference type="PANTHER" id="PTHR30175:SF3">
    <property type="entry name" value="PTS SYSTEM N-ACETYLMURAMIC ACID-SPECIFIC EIIBC COMPONENT"/>
    <property type="match status" value="1"/>
</dbReference>
<dbReference type="Pfam" id="PF00367">
    <property type="entry name" value="PTS_EIIB"/>
    <property type="match status" value="1"/>
</dbReference>
<dbReference type="Pfam" id="PF02378">
    <property type="entry name" value="PTS_EIIC"/>
    <property type="match status" value="1"/>
</dbReference>
<dbReference type="SUPFAM" id="SSF55604">
    <property type="entry name" value="Glucose permease domain IIB"/>
    <property type="match status" value="1"/>
</dbReference>
<dbReference type="PROSITE" id="PS51098">
    <property type="entry name" value="PTS_EIIB_TYPE_1"/>
    <property type="match status" value="1"/>
</dbReference>
<dbReference type="PROSITE" id="PS01035">
    <property type="entry name" value="PTS_EIIB_TYPE_1_CYS"/>
    <property type="match status" value="1"/>
</dbReference>
<dbReference type="PROSITE" id="PS51103">
    <property type="entry name" value="PTS_EIIC_TYPE_1"/>
    <property type="match status" value="1"/>
</dbReference>
<evidence type="ECO:0000250" key="1">
    <source>
        <dbReference type="UniProtKB" id="P77272"/>
    </source>
</evidence>
<evidence type="ECO:0000255" key="2">
    <source>
        <dbReference type="PROSITE-ProRule" id="PRU00421"/>
    </source>
</evidence>
<evidence type="ECO:0000255" key="3">
    <source>
        <dbReference type="PROSITE-ProRule" id="PRU00426"/>
    </source>
</evidence>
<evidence type="ECO:0000305" key="4"/>
<sequence>MAKITQTMMAQVLSLVGGSGNVAKCGNCMTRLRLTLNNSALADHAALKKISGVMGVVESDAQLQIILGPGKAQTAADMMNALIESGDNVAPAVSEADLSTIAAQQKKQMKSKQTSAVQRFLSKFATIFTPLIPGFIAAGLLLGIATLLEQIYVVGQTPSEFMLDLVAYLKVFGKGLFAFLSILIGYNAQQAFGGSGVNGAILASLFVLGYDPEATKGIYSGMSEFFGFAIDPRGNIIGVLLAAILGAQVERKVREYMPDDLDMILTSVVTLLIMGAVTFLIIMPIGGELFKGMSWLFLNLNDNPLGAAILAGLFLISVVFGIHQGFVPVYFALMEAQGFNSLFPILAMAGAGQVGASLALYARAKKETTIRTQIKGAIIPGILGIGEPLIYGVTLPRVKPFVTACIGGAAGGFFIGLISYLGLPVGLNTVFGPSGVVAIPLMTSADGIFAGMAVFVGGLLISYTVGFAATYFFGCKDVDLS</sequence>
<protein>
    <recommendedName>
        <fullName evidence="1">PTS system N-acetylmuramic acid-specific EIIBC component</fullName>
    </recommendedName>
    <alternativeName>
        <fullName evidence="1">EIIBC-MurNAc</fullName>
    </alternativeName>
    <domain>
        <recommendedName>
            <fullName evidence="1">N-acetylmuramic acid-specific phosphotransferase enzyme IIB component</fullName>
            <ecNumber evidence="1">2.7.1.192</ecNumber>
        </recommendedName>
        <alternativeName>
            <fullName evidence="1">PTS system N-acetylmuramic acid-specific EIIB component</fullName>
        </alternativeName>
    </domain>
    <domain>
        <recommendedName>
            <fullName evidence="1">N-acetylmuramic acid permease IIC component</fullName>
        </recommendedName>
        <alternativeName>
            <fullName evidence="1">PTS system N-acetylmuramic acid-specific EIIC component</fullName>
        </alternativeName>
    </domain>
</protein>
<gene>
    <name type="primary">murP</name>
    <name type="ordered locus">VC_0207</name>
</gene>